<keyword id="KW-1185">Reference proteome</keyword>
<feature type="chain" id="PRO_0000132955" description="Uncharacterized 36.6 kDa protein in EGT-IAP1 intergenic region">
    <location>
        <begin position="1"/>
        <end position="319"/>
    </location>
</feature>
<feature type="region of interest" description="Disordered" evidence="1">
    <location>
        <begin position="268"/>
        <end position="319"/>
    </location>
</feature>
<feature type="compositionally biased region" description="Low complexity" evidence="1">
    <location>
        <begin position="268"/>
        <end position="312"/>
    </location>
</feature>
<feature type="sequence conflict" description="In Ref. 2; AAA66790." evidence="2" ref="2">
    <original>K</original>
    <variation>E</variation>
    <location>
        <position position="74"/>
    </location>
</feature>
<feature type="sequence conflict" description="In Ref. 2; AAA66790." evidence="2" ref="2">
    <original>VLTILAVQCWNLYVQLKEMRHNIYMKRR</original>
    <variation>CAYDTGCAMLEFVRAVKGDASQHIHEKA</variation>
    <location>
        <begin position="203"/>
        <end position="230"/>
    </location>
</feature>
<protein>
    <recommendedName>
        <fullName>Uncharacterized 36.6 kDa protein in EGT-IAP1 intergenic region</fullName>
    </recommendedName>
    <alternativeName>
        <fullName>ORF 5</fullName>
    </alternativeName>
</protein>
<organismHost>
    <name type="scientific">Lepidoptera</name>
    <name type="common">butterflies and moths</name>
    <dbReference type="NCBI Taxonomy" id="7088"/>
</organismHost>
<name>Y021_NPVAC</name>
<evidence type="ECO:0000256" key="1">
    <source>
        <dbReference type="SAM" id="MobiDB-lite"/>
    </source>
</evidence>
<evidence type="ECO:0000305" key="2"/>
<dbReference type="EMBL" id="L22858">
    <property type="protein sequence ID" value="AAA66651.1"/>
    <property type="molecule type" value="Genomic_DNA"/>
</dbReference>
<dbReference type="EMBL" id="M96361">
    <property type="protein sequence ID" value="AAA66790.1"/>
    <property type="molecule type" value="Genomic_DNA"/>
</dbReference>
<dbReference type="PIR" id="E44221">
    <property type="entry name" value="E44221"/>
</dbReference>
<dbReference type="PIR" id="E72852">
    <property type="entry name" value="E72852"/>
</dbReference>
<dbReference type="RefSeq" id="NP_054050.1">
    <property type="nucleotide sequence ID" value="NC_001623.1"/>
</dbReference>
<dbReference type="SMR" id="P41426"/>
<dbReference type="GeneID" id="1403853"/>
<dbReference type="KEGG" id="vg:1403853"/>
<dbReference type="OrthoDB" id="9234at10239"/>
<dbReference type="Proteomes" id="UP000008292">
    <property type="component" value="Segment"/>
</dbReference>
<dbReference type="InterPro" id="IPR010639">
    <property type="entry name" value="Actin-rearrang-inducing_fac"/>
</dbReference>
<dbReference type="Pfam" id="PF06770">
    <property type="entry name" value="Arif-1"/>
    <property type="match status" value="1"/>
</dbReference>
<accession>P41426</accession>
<accession>Q65334</accession>
<organism>
    <name type="scientific">Autographa californica nuclear polyhedrosis virus</name>
    <name type="common">AcMNPV</name>
    <dbReference type="NCBI Taxonomy" id="46015"/>
    <lineage>
        <taxon>Viruses</taxon>
        <taxon>Viruses incertae sedis</taxon>
        <taxon>Naldaviricetes</taxon>
        <taxon>Lefavirales</taxon>
        <taxon>Baculoviridae</taxon>
        <taxon>Alphabaculovirus</taxon>
        <taxon>Alphabaculovirus aucalifornicae</taxon>
    </lineage>
</organism>
<proteinExistence type="predicted"/>
<reference key="1">
    <citation type="journal article" date="1994" name="Virology">
        <title>The complete DNA sequence of Autographa californica nuclear polyhedrosis virus.</title>
        <authorList>
            <person name="Ayres M.D."/>
            <person name="Howard S.C."/>
            <person name="Kuzio J."/>
            <person name="Lopez-Ferber M."/>
            <person name="Possee R.D."/>
        </authorList>
    </citation>
    <scope>NUCLEOTIDE SEQUENCE [LARGE SCALE GENOMIC DNA]</scope>
    <source>
        <strain>C6</strain>
    </source>
</reference>
<reference key="2">
    <citation type="journal article" date="1992" name="Virology">
        <title>Sequence, genomic organization of the EcoRI-A fragment of Autographa californica nuclear polyhedrosis virus, and identification of a viral-encoded protein resembling the outer capsid protein VP8 of rotavirus.</title>
        <authorList>
            <person name="Braunagel S.C."/>
            <person name="Daniel K.D."/>
            <person name="Reilly L.M."/>
            <person name="Guarino L.A."/>
            <person name="Hong T."/>
            <person name="Summers M.D."/>
        </authorList>
    </citation>
    <scope>NUCLEOTIDE SEQUENCE [GENOMIC DNA]</scope>
    <source>
        <strain>E2</strain>
    </source>
</reference>
<sequence length="319" mass="36555">MLNKITAVLQFGLNASLLLAYLIVFVLSIMGVIDSRYAFLLEIEGKQSVINLSIPIMLAFGMWILFYMFYFIWKIIVWTKNRSSSSNTNVNFNAKENFYVAITCIMVNVITGLCWMLFAAFQIYVFKNGHLPALDVLYRHYDLESMCWNSIVYLEIDYANTETLSQNCVYVNIYKKCIMCRAIVSDHEPTVFNQNYPVIIMGVLTILAVQCWNLYVQLKEMRHNIYMKRRAEAEKASYEHYCDIDYRREERESNSRLLEVVSEGRNSSSVVAVTHPPSTTSTTTSVSETLSSFIAPSDLSSQPSPSSHPSSPFGNHNEF</sequence>